<evidence type="ECO:0000255" key="1">
    <source>
        <dbReference type="HAMAP-Rule" id="MF_01077"/>
    </source>
</evidence>
<evidence type="ECO:0000256" key="2">
    <source>
        <dbReference type="SAM" id="MobiDB-lite"/>
    </source>
</evidence>
<comment type="function">
    <text evidence="1">Required for maturation of 30S ribosomal subunits.</text>
</comment>
<comment type="subcellular location">
    <subcellularLocation>
        <location evidence="1">Cytoplasm</location>
    </subcellularLocation>
</comment>
<comment type="similarity">
    <text evidence="1">Belongs to the RimP family.</text>
</comment>
<gene>
    <name evidence="1" type="primary">rimP</name>
    <name type="ordered locus">Noca_3193</name>
</gene>
<sequence>MSSANQDATRGQIEAELDDPLRALGLDIEAVEITPAGKRRILRVAVDKDGGVTLDEVAEATREVNRVLDGSEVMGEQPYTLEVTSRGVDRPLTLPRHWRRNAGRLVKVAFADGRAATGRILDSNEEQVTLDVGGTRQQVAYAEVKKALVQVEFNRPTDGPGDDGDDGGDDEAGEA</sequence>
<reference key="1">
    <citation type="submission" date="2006-12" db="EMBL/GenBank/DDBJ databases">
        <title>Complete sequence of chromosome 1 of Nocardioides sp. JS614.</title>
        <authorList>
            <person name="Copeland A."/>
            <person name="Lucas S."/>
            <person name="Lapidus A."/>
            <person name="Barry K."/>
            <person name="Detter J.C."/>
            <person name="Glavina del Rio T."/>
            <person name="Hammon N."/>
            <person name="Israni S."/>
            <person name="Dalin E."/>
            <person name="Tice H."/>
            <person name="Pitluck S."/>
            <person name="Thompson L.S."/>
            <person name="Brettin T."/>
            <person name="Bruce D."/>
            <person name="Han C."/>
            <person name="Tapia R."/>
            <person name="Schmutz J."/>
            <person name="Larimer F."/>
            <person name="Land M."/>
            <person name="Hauser L."/>
            <person name="Kyrpides N."/>
            <person name="Kim E."/>
            <person name="Mattes T."/>
            <person name="Gossett J."/>
            <person name="Richardson P."/>
        </authorList>
    </citation>
    <scope>NUCLEOTIDE SEQUENCE [LARGE SCALE GENOMIC DNA]</scope>
    <source>
        <strain>ATCC BAA-499 / JS614</strain>
    </source>
</reference>
<protein>
    <recommendedName>
        <fullName evidence="1">Ribosome maturation factor RimP</fullName>
    </recommendedName>
</protein>
<accession>A1SLL0</accession>
<feature type="chain" id="PRO_1000064739" description="Ribosome maturation factor RimP">
    <location>
        <begin position="1"/>
        <end position="175"/>
    </location>
</feature>
<feature type="region of interest" description="Disordered" evidence="2">
    <location>
        <begin position="152"/>
        <end position="175"/>
    </location>
</feature>
<feature type="compositionally biased region" description="Acidic residues" evidence="2">
    <location>
        <begin position="160"/>
        <end position="175"/>
    </location>
</feature>
<name>RIMP_NOCSJ</name>
<organism>
    <name type="scientific">Nocardioides sp. (strain ATCC BAA-499 / JS614)</name>
    <dbReference type="NCBI Taxonomy" id="196162"/>
    <lineage>
        <taxon>Bacteria</taxon>
        <taxon>Bacillati</taxon>
        <taxon>Actinomycetota</taxon>
        <taxon>Actinomycetes</taxon>
        <taxon>Propionibacteriales</taxon>
        <taxon>Nocardioidaceae</taxon>
        <taxon>Nocardioides</taxon>
    </lineage>
</organism>
<proteinExistence type="inferred from homology"/>
<dbReference type="EMBL" id="CP000509">
    <property type="protein sequence ID" value="ABL82695.1"/>
    <property type="molecule type" value="Genomic_DNA"/>
</dbReference>
<dbReference type="RefSeq" id="WP_011756629.1">
    <property type="nucleotide sequence ID" value="NC_008699.1"/>
</dbReference>
<dbReference type="SMR" id="A1SLL0"/>
<dbReference type="STRING" id="196162.Noca_3193"/>
<dbReference type="KEGG" id="nca:Noca_3193"/>
<dbReference type="eggNOG" id="COG0779">
    <property type="taxonomic scope" value="Bacteria"/>
</dbReference>
<dbReference type="HOGENOM" id="CLU_070525_3_0_11"/>
<dbReference type="OrthoDB" id="9805006at2"/>
<dbReference type="Proteomes" id="UP000000640">
    <property type="component" value="Chromosome"/>
</dbReference>
<dbReference type="GO" id="GO:0005829">
    <property type="term" value="C:cytosol"/>
    <property type="evidence" value="ECO:0007669"/>
    <property type="project" value="TreeGrafter"/>
</dbReference>
<dbReference type="GO" id="GO:0000028">
    <property type="term" value="P:ribosomal small subunit assembly"/>
    <property type="evidence" value="ECO:0007669"/>
    <property type="project" value="TreeGrafter"/>
</dbReference>
<dbReference type="GO" id="GO:0006412">
    <property type="term" value="P:translation"/>
    <property type="evidence" value="ECO:0007669"/>
    <property type="project" value="TreeGrafter"/>
</dbReference>
<dbReference type="CDD" id="cd01734">
    <property type="entry name" value="YlxS_C"/>
    <property type="match status" value="1"/>
</dbReference>
<dbReference type="Gene3D" id="3.30.300.70">
    <property type="entry name" value="RimP-like superfamily, N-terminal"/>
    <property type="match status" value="1"/>
</dbReference>
<dbReference type="HAMAP" id="MF_01077">
    <property type="entry name" value="RimP"/>
    <property type="match status" value="1"/>
</dbReference>
<dbReference type="InterPro" id="IPR003728">
    <property type="entry name" value="Ribosome_maturation_RimP"/>
</dbReference>
<dbReference type="InterPro" id="IPR028998">
    <property type="entry name" value="RimP_C"/>
</dbReference>
<dbReference type="InterPro" id="IPR036847">
    <property type="entry name" value="RimP_C_sf"/>
</dbReference>
<dbReference type="InterPro" id="IPR028989">
    <property type="entry name" value="RimP_N"/>
</dbReference>
<dbReference type="InterPro" id="IPR035956">
    <property type="entry name" value="RimP_N_sf"/>
</dbReference>
<dbReference type="NCBIfam" id="NF000930">
    <property type="entry name" value="PRK00092.2-2"/>
    <property type="match status" value="1"/>
</dbReference>
<dbReference type="PANTHER" id="PTHR33867">
    <property type="entry name" value="RIBOSOME MATURATION FACTOR RIMP"/>
    <property type="match status" value="1"/>
</dbReference>
<dbReference type="PANTHER" id="PTHR33867:SF1">
    <property type="entry name" value="RIBOSOME MATURATION FACTOR RIMP"/>
    <property type="match status" value="1"/>
</dbReference>
<dbReference type="Pfam" id="PF17384">
    <property type="entry name" value="DUF150_C"/>
    <property type="match status" value="1"/>
</dbReference>
<dbReference type="Pfam" id="PF02576">
    <property type="entry name" value="RimP_N"/>
    <property type="match status" value="1"/>
</dbReference>
<dbReference type="SUPFAM" id="SSF74942">
    <property type="entry name" value="YhbC-like, C-terminal domain"/>
    <property type="match status" value="1"/>
</dbReference>
<dbReference type="SUPFAM" id="SSF75420">
    <property type="entry name" value="YhbC-like, N-terminal domain"/>
    <property type="match status" value="1"/>
</dbReference>
<keyword id="KW-0963">Cytoplasm</keyword>
<keyword id="KW-1185">Reference proteome</keyword>
<keyword id="KW-0690">Ribosome biogenesis</keyword>